<protein>
    <recommendedName>
        <fullName evidence="1">Ribosomal RNA small subunit methyltransferase A</fullName>
        <ecNumber evidence="1">2.1.1.182</ecNumber>
    </recommendedName>
    <alternativeName>
        <fullName evidence="1">16S rRNA (adenine(1518)-N(6)/adenine(1519)-N(6))-dimethyltransferase</fullName>
    </alternativeName>
    <alternativeName>
        <fullName evidence="1">16S rRNA dimethyladenosine transferase</fullName>
    </alternativeName>
    <alternativeName>
        <fullName evidence="1">16S rRNA dimethylase</fullName>
    </alternativeName>
    <alternativeName>
        <fullName evidence="1">S-adenosylmethionine-6-N', N'-adenosyl(rRNA) dimethyltransferase</fullName>
    </alternativeName>
</protein>
<comment type="function">
    <text evidence="1">Specifically dimethylates two adjacent adenosines (A1518 and A1519) in the loop of a conserved hairpin near the 3'-end of 16S rRNA in the 30S particle. May play a critical role in biogenesis of 30S subunits.</text>
</comment>
<comment type="catalytic activity">
    <reaction evidence="1">
        <text>adenosine(1518)/adenosine(1519) in 16S rRNA + 4 S-adenosyl-L-methionine = N(6)-dimethyladenosine(1518)/N(6)-dimethyladenosine(1519) in 16S rRNA + 4 S-adenosyl-L-homocysteine + 4 H(+)</text>
        <dbReference type="Rhea" id="RHEA:19609"/>
        <dbReference type="Rhea" id="RHEA-COMP:10232"/>
        <dbReference type="Rhea" id="RHEA-COMP:10233"/>
        <dbReference type="ChEBI" id="CHEBI:15378"/>
        <dbReference type="ChEBI" id="CHEBI:57856"/>
        <dbReference type="ChEBI" id="CHEBI:59789"/>
        <dbReference type="ChEBI" id="CHEBI:74411"/>
        <dbReference type="ChEBI" id="CHEBI:74493"/>
        <dbReference type="EC" id="2.1.1.182"/>
    </reaction>
</comment>
<comment type="subcellular location">
    <subcellularLocation>
        <location evidence="1">Cytoplasm</location>
    </subcellularLocation>
</comment>
<comment type="similarity">
    <text evidence="1">Belongs to the class I-like SAM-binding methyltransferase superfamily. rRNA adenine N(6)-methyltransferase family. RsmA subfamily.</text>
</comment>
<reference key="1">
    <citation type="journal article" date="2004" name="Proc. Natl. Acad. Sci. U.S.A.">
        <title>The complete genomic sequence of Nocardia farcinica IFM 10152.</title>
        <authorList>
            <person name="Ishikawa J."/>
            <person name="Yamashita A."/>
            <person name="Mikami Y."/>
            <person name="Hoshino Y."/>
            <person name="Kurita H."/>
            <person name="Hotta K."/>
            <person name="Shiba T."/>
            <person name="Hattori M."/>
        </authorList>
    </citation>
    <scope>NUCLEOTIDE SEQUENCE [LARGE SCALE GENOMIC DNA]</scope>
    <source>
        <strain>IFM 10152</strain>
    </source>
</reference>
<name>RSMA_NOCFA</name>
<sequence>MSEADVTARGDAALLGPAEVRALAERFGVRPTKQLGQNFVHDANTVRRIVTAAGVGRADTVLEVGPGLGSLTLALLDVVDSVVAVEIDPVLAEHLPRTVADRAPALAGRLRVVRDDALRVRAADLPASPTALVANLPYNVAVPVLLHLLAELPGLRTALVMVQAEVADRLAAEPGSRVYGVPSVKAGFFGTVRRAGAVGTQVFWPVPRVESGLVRVERYVEPPWPMDEQHRRRVFEIIDAAFAQRRKTLRAALAGWAGSPAEAERRLLAAGIDPTARGETLDTAAYVRLAAQA</sequence>
<gene>
    <name evidence="1" type="primary">rsmA</name>
    <name evidence="1" type="synonym">ksgA</name>
    <name type="ordered locus">NFA_49030</name>
</gene>
<feature type="chain" id="PRO_0000101574" description="Ribosomal RNA small subunit methyltransferase A">
    <location>
        <begin position="1"/>
        <end position="293"/>
    </location>
</feature>
<feature type="binding site" evidence="1">
    <location>
        <position position="38"/>
    </location>
    <ligand>
        <name>S-adenosyl-L-methionine</name>
        <dbReference type="ChEBI" id="CHEBI:59789"/>
    </ligand>
</feature>
<feature type="binding site" evidence="1">
    <location>
        <position position="40"/>
    </location>
    <ligand>
        <name>S-adenosyl-L-methionine</name>
        <dbReference type="ChEBI" id="CHEBI:59789"/>
    </ligand>
</feature>
<feature type="binding site" evidence="1">
    <location>
        <position position="65"/>
    </location>
    <ligand>
        <name>S-adenosyl-L-methionine</name>
        <dbReference type="ChEBI" id="CHEBI:59789"/>
    </ligand>
</feature>
<feature type="binding site" evidence="1">
    <location>
        <position position="86"/>
    </location>
    <ligand>
        <name>S-adenosyl-L-methionine</name>
        <dbReference type="ChEBI" id="CHEBI:59789"/>
    </ligand>
</feature>
<feature type="binding site" evidence="1">
    <location>
        <position position="116"/>
    </location>
    <ligand>
        <name>S-adenosyl-L-methionine</name>
        <dbReference type="ChEBI" id="CHEBI:59789"/>
    </ligand>
</feature>
<feature type="binding site" evidence="1">
    <location>
        <position position="135"/>
    </location>
    <ligand>
        <name>S-adenosyl-L-methionine</name>
        <dbReference type="ChEBI" id="CHEBI:59789"/>
    </ligand>
</feature>
<evidence type="ECO:0000255" key="1">
    <source>
        <dbReference type="HAMAP-Rule" id="MF_00607"/>
    </source>
</evidence>
<organism>
    <name type="scientific">Nocardia farcinica (strain IFM 10152)</name>
    <dbReference type="NCBI Taxonomy" id="247156"/>
    <lineage>
        <taxon>Bacteria</taxon>
        <taxon>Bacillati</taxon>
        <taxon>Actinomycetota</taxon>
        <taxon>Actinomycetes</taxon>
        <taxon>Mycobacteriales</taxon>
        <taxon>Nocardiaceae</taxon>
        <taxon>Nocardia</taxon>
    </lineage>
</organism>
<proteinExistence type="inferred from homology"/>
<accession>Q5YPY6</accession>
<dbReference type="EC" id="2.1.1.182" evidence="1"/>
<dbReference type="EMBL" id="AP006618">
    <property type="protein sequence ID" value="BAD59755.1"/>
    <property type="molecule type" value="Genomic_DNA"/>
</dbReference>
<dbReference type="RefSeq" id="WP_011211438.1">
    <property type="nucleotide sequence ID" value="NC_006361.1"/>
</dbReference>
<dbReference type="SMR" id="Q5YPY6"/>
<dbReference type="STRING" id="247156.NFA_49030"/>
<dbReference type="GeneID" id="61135497"/>
<dbReference type="KEGG" id="nfa:NFA_49030"/>
<dbReference type="eggNOG" id="COG0030">
    <property type="taxonomic scope" value="Bacteria"/>
</dbReference>
<dbReference type="HOGENOM" id="CLU_041220_1_1_11"/>
<dbReference type="OrthoDB" id="9814755at2"/>
<dbReference type="Proteomes" id="UP000006820">
    <property type="component" value="Chromosome"/>
</dbReference>
<dbReference type="GO" id="GO:0005829">
    <property type="term" value="C:cytosol"/>
    <property type="evidence" value="ECO:0007669"/>
    <property type="project" value="TreeGrafter"/>
</dbReference>
<dbReference type="GO" id="GO:0052908">
    <property type="term" value="F:16S rRNA (adenine(1518)-N(6)/adenine(1519)-N(6))-dimethyltransferase activity"/>
    <property type="evidence" value="ECO:0007669"/>
    <property type="project" value="UniProtKB-EC"/>
</dbReference>
<dbReference type="GO" id="GO:0003723">
    <property type="term" value="F:RNA binding"/>
    <property type="evidence" value="ECO:0007669"/>
    <property type="project" value="UniProtKB-KW"/>
</dbReference>
<dbReference type="CDD" id="cd02440">
    <property type="entry name" value="AdoMet_MTases"/>
    <property type="match status" value="1"/>
</dbReference>
<dbReference type="FunFam" id="1.10.8.100:FF:000003">
    <property type="entry name" value="Ribosomal RNA small subunit methyltransferase A"/>
    <property type="match status" value="1"/>
</dbReference>
<dbReference type="FunFam" id="3.40.50.150:FF:000023">
    <property type="entry name" value="Ribosomal RNA small subunit methyltransferase A"/>
    <property type="match status" value="1"/>
</dbReference>
<dbReference type="Gene3D" id="1.10.8.100">
    <property type="entry name" value="Ribosomal RNA adenine dimethylase-like, domain 2"/>
    <property type="match status" value="1"/>
</dbReference>
<dbReference type="Gene3D" id="3.40.50.150">
    <property type="entry name" value="Vaccinia Virus protein VP39"/>
    <property type="match status" value="1"/>
</dbReference>
<dbReference type="HAMAP" id="MF_00607">
    <property type="entry name" value="16SrRNA_methyltr_A"/>
    <property type="match status" value="1"/>
</dbReference>
<dbReference type="InterPro" id="IPR001737">
    <property type="entry name" value="KsgA/Erm"/>
</dbReference>
<dbReference type="InterPro" id="IPR023165">
    <property type="entry name" value="rRNA_Ade_diMease-like_C"/>
</dbReference>
<dbReference type="InterPro" id="IPR020596">
    <property type="entry name" value="rRNA_Ade_Mease_Trfase_CS"/>
</dbReference>
<dbReference type="InterPro" id="IPR020598">
    <property type="entry name" value="rRNA_Ade_methylase_Trfase_N"/>
</dbReference>
<dbReference type="InterPro" id="IPR011530">
    <property type="entry name" value="rRNA_adenine_dimethylase"/>
</dbReference>
<dbReference type="InterPro" id="IPR029063">
    <property type="entry name" value="SAM-dependent_MTases_sf"/>
</dbReference>
<dbReference type="NCBIfam" id="TIGR00755">
    <property type="entry name" value="ksgA"/>
    <property type="match status" value="1"/>
</dbReference>
<dbReference type="PANTHER" id="PTHR11727">
    <property type="entry name" value="DIMETHYLADENOSINE TRANSFERASE"/>
    <property type="match status" value="1"/>
</dbReference>
<dbReference type="PANTHER" id="PTHR11727:SF7">
    <property type="entry name" value="DIMETHYLADENOSINE TRANSFERASE-RELATED"/>
    <property type="match status" value="1"/>
</dbReference>
<dbReference type="Pfam" id="PF00398">
    <property type="entry name" value="RrnaAD"/>
    <property type="match status" value="1"/>
</dbReference>
<dbReference type="SMART" id="SM00650">
    <property type="entry name" value="rADc"/>
    <property type="match status" value="1"/>
</dbReference>
<dbReference type="SUPFAM" id="SSF53335">
    <property type="entry name" value="S-adenosyl-L-methionine-dependent methyltransferases"/>
    <property type="match status" value="1"/>
</dbReference>
<dbReference type="PROSITE" id="PS01131">
    <property type="entry name" value="RRNA_A_DIMETH"/>
    <property type="match status" value="1"/>
</dbReference>
<dbReference type="PROSITE" id="PS51689">
    <property type="entry name" value="SAM_RNA_A_N6_MT"/>
    <property type="match status" value="1"/>
</dbReference>
<keyword id="KW-0963">Cytoplasm</keyword>
<keyword id="KW-0489">Methyltransferase</keyword>
<keyword id="KW-1185">Reference proteome</keyword>
<keyword id="KW-0694">RNA-binding</keyword>
<keyword id="KW-0698">rRNA processing</keyword>
<keyword id="KW-0949">S-adenosyl-L-methionine</keyword>
<keyword id="KW-0808">Transferase</keyword>